<proteinExistence type="evidence at protein level"/>
<name>POF3_SCHPO</name>
<keyword id="KW-0496">Mitochondrion</keyword>
<keyword id="KW-0539">Nucleus</keyword>
<keyword id="KW-1185">Reference proteome</keyword>
<keyword id="KW-0677">Repeat</keyword>
<keyword id="KW-0802">TPR repeat</keyword>
<keyword id="KW-0833">Ubl conjugation pathway</keyword>
<dbReference type="EMBL" id="AB032411">
    <property type="protein sequence ID" value="BAA84529.1"/>
    <property type="molecule type" value="Genomic_DNA"/>
</dbReference>
<dbReference type="EMBL" id="CU329672">
    <property type="protein sequence ID" value="CAA19347.1"/>
    <property type="molecule type" value="Genomic_DNA"/>
</dbReference>
<dbReference type="PIR" id="T41727">
    <property type="entry name" value="T41727"/>
</dbReference>
<dbReference type="RefSeq" id="NP_588152.1">
    <property type="nucleotide sequence ID" value="NM_001023141.2"/>
</dbReference>
<dbReference type="BioGRID" id="276089">
    <property type="interactions" value="96"/>
</dbReference>
<dbReference type="FunCoup" id="O74991">
    <property type="interactions" value="5"/>
</dbReference>
<dbReference type="IntAct" id="O74991">
    <property type="interactions" value="4"/>
</dbReference>
<dbReference type="STRING" id="284812.O74991"/>
<dbReference type="iPTMnet" id="O74991"/>
<dbReference type="PaxDb" id="4896-SPCC338.16.1"/>
<dbReference type="EnsemblFungi" id="SPCC338.16.1">
    <property type="protein sequence ID" value="SPCC338.16.1:pep"/>
    <property type="gene ID" value="SPCC338.16"/>
</dbReference>
<dbReference type="GeneID" id="2539527"/>
<dbReference type="KEGG" id="spo:2539527"/>
<dbReference type="PomBase" id="SPCC338.16">
    <property type="gene designation" value="pof3"/>
</dbReference>
<dbReference type="VEuPathDB" id="FungiDB:SPCC338.16"/>
<dbReference type="eggNOG" id="ENOG502SA77">
    <property type="taxonomic scope" value="Eukaryota"/>
</dbReference>
<dbReference type="HOGENOM" id="CLU_472639_0_0_1"/>
<dbReference type="InParanoid" id="O74991"/>
<dbReference type="OMA" id="MRDLWMR"/>
<dbReference type="PhylomeDB" id="O74991"/>
<dbReference type="PRO" id="PR:O74991"/>
<dbReference type="Proteomes" id="UP000002485">
    <property type="component" value="Chromosome III"/>
</dbReference>
<dbReference type="GO" id="GO:0005739">
    <property type="term" value="C:mitochondrion"/>
    <property type="evidence" value="ECO:0007669"/>
    <property type="project" value="UniProtKB-SubCell"/>
</dbReference>
<dbReference type="GO" id="GO:0005634">
    <property type="term" value="C:nucleus"/>
    <property type="evidence" value="ECO:0000266"/>
    <property type="project" value="PomBase"/>
</dbReference>
<dbReference type="GO" id="GO:0000151">
    <property type="term" value="C:ubiquitin ligase complex"/>
    <property type="evidence" value="ECO:0000255"/>
    <property type="project" value="PomBase"/>
</dbReference>
<dbReference type="GO" id="GO:1990756">
    <property type="term" value="F:ubiquitin-like ligase-substrate adaptor activity"/>
    <property type="evidence" value="ECO:0000353"/>
    <property type="project" value="PomBase"/>
</dbReference>
<dbReference type="GO" id="GO:0007535">
    <property type="term" value="P:donor selection"/>
    <property type="evidence" value="ECO:0000314"/>
    <property type="project" value="PomBase"/>
</dbReference>
<dbReference type="GO" id="GO:1903464">
    <property type="term" value="P:negative regulation of mitotic cell cycle DNA replication"/>
    <property type="evidence" value="ECO:0000315"/>
    <property type="project" value="PomBase"/>
</dbReference>
<dbReference type="GO" id="GO:0031146">
    <property type="term" value="P:SCF-dependent proteasomal ubiquitin-dependent protein catabolic process"/>
    <property type="evidence" value="ECO:0000315"/>
    <property type="project" value="PomBase"/>
</dbReference>
<dbReference type="GO" id="GO:0000723">
    <property type="term" value="P:telomere maintenance"/>
    <property type="evidence" value="ECO:0000315"/>
    <property type="project" value="PomBase"/>
</dbReference>
<dbReference type="GO" id="GO:0006511">
    <property type="term" value="P:ubiquitin-dependent protein catabolic process"/>
    <property type="evidence" value="ECO:0000315"/>
    <property type="project" value="PomBase"/>
</dbReference>
<dbReference type="CDD" id="cd09917">
    <property type="entry name" value="F-box_SF"/>
    <property type="match status" value="1"/>
</dbReference>
<dbReference type="FunFam" id="1.25.40.10:FF:001514">
    <property type="entry name" value="Leucine Rich Repeat domain protein (AFU_orthologue AFUA_7G02000)"/>
    <property type="match status" value="1"/>
</dbReference>
<dbReference type="Gene3D" id="1.20.1280.50">
    <property type="match status" value="1"/>
</dbReference>
<dbReference type="Gene3D" id="3.80.10.10">
    <property type="entry name" value="Ribonuclease Inhibitor"/>
    <property type="match status" value="1"/>
</dbReference>
<dbReference type="Gene3D" id="1.25.40.10">
    <property type="entry name" value="Tetratricopeptide repeat domain"/>
    <property type="match status" value="1"/>
</dbReference>
<dbReference type="InterPro" id="IPR036047">
    <property type="entry name" value="F-box-like_dom_sf"/>
</dbReference>
<dbReference type="InterPro" id="IPR001810">
    <property type="entry name" value="F-box_dom"/>
</dbReference>
<dbReference type="InterPro" id="IPR032675">
    <property type="entry name" value="LRR_dom_sf"/>
</dbReference>
<dbReference type="InterPro" id="IPR011990">
    <property type="entry name" value="TPR-like_helical_dom_sf"/>
</dbReference>
<dbReference type="InterPro" id="IPR019734">
    <property type="entry name" value="TPR_rpt"/>
</dbReference>
<dbReference type="PANTHER" id="PTHR38926">
    <property type="entry name" value="F-BOX DOMAIN CONTAINING PROTEIN, EXPRESSED"/>
    <property type="match status" value="1"/>
</dbReference>
<dbReference type="PANTHER" id="PTHR38926:SF72">
    <property type="entry name" value="IM:7136021-RELATED"/>
    <property type="match status" value="1"/>
</dbReference>
<dbReference type="Pfam" id="PF12937">
    <property type="entry name" value="F-box-like"/>
    <property type="match status" value="1"/>
</dbReference>
<dbReference type="SMART" id="SM00256">
    <property type="entry name" value="FBOX"/>
    <property type="match status" value="1"/>
</dbReference>
<dbReference type="SMART" id="SM00028">
    <property type="entry name" value="TPR"/>
    <property type="match status" value="3"/>
</dbReference>
<dbReference type="SUPFAM" id="SSF81383">
    <property type="entry name" value="F-box domain"/>
    <property type="match status" value="1"/>
</dbReference>
<dbReference type="SUPFAM" id="SSF52047">
    <property type="entry name" value="RNI-like"/>
    <property type="match status" value="1"/>
</dbReference>
<dbReference type="SUPFAM" id="SSF48452">
    <property type="entry name" value="TPR-like"/>
    <property type="match status" value="1"/>
</dbReference>
<dbReference type="PROSITE" id="PS50181">
    <property type="entry name" value="FBOX"/>
    <property type="match status" value="1"/>
</dbReference>
<dbReference type="PROSITE" id="PS50293">
    <property type="entry name" value="TPR_REGION"/>
    <property type="match status" value="1"/>
</dbReference>
<evidence type="ECO:0000255" key="1">
    <source>
        <dbReference type="PROSITE-ProRule" id="PRU00080"/>
    </source>
</evidence>
<evidence type="ECO:0000269" key="2">
    <source>
    </source>
</evidence>
<evidence type="ECO:0000269" key="3">
    <source>
    </source>
</evidence>
<evidence type="ECO:0000269" key="4">
    <source>
    </source>
</evidence>
<accession>O74991</accession>
<sequence length="577" mass="66239">MNNYQVKAIKEKTQQYLSKRKFEDALTFITKTIEQEPNPTIDLFELRAQVYEKSGQYSQAELDAKRMIHLNARNARGYLRLGKLLQLDGFDKKADQLYTQGLRMVHKMDPLRPVLKKVSQRLNERILRTRPVLDLFRILPREVLLCILQQLNFKSIVQCMQVCKHWRDCIKKEPSLFCCLDFSCASPRSVNSRDRNVMAVARYSVYSKDNIQEVIGLEKLGILTPTKALLRSVKSLKVYKTISPLHTQSTDKLYTIWTPFSELHYFYCATPITFSIASKILSCCKKLKQVELVDLIPDLIFDSMDWDKLFNAESVPLALKSLTFIRNQKFPFHHKEQQFLKDLLSASPYLEYLEASYQSDLVAAIKKYKINLRSLIIIDEGVSNTVKDLAFLPQSLTTLIVKPCNPASTILCPYLFPTNVRMESLINLELFLYLRLSQNDIDNVVKFLTSCYKLKKLVLHDSLALAPHFFEIFASLPELEHLEIPDNVALQNKHAIHITDCCPNLKYVNFSNSISLDGSGFIAVLRGLKELKRIDIINCDSVSRDAIDWARSKGMQVTVASSLPNSQPLGTKKIRLI</sequence>
<reference key="1">
    <citation type="journal article" date="2002" name="Mol. Biol. Cell">
        <title>Fission yeast F-box protein Pof3 is required for genome integrity and telomere function.</title>
        <authorList>
            <person name="Katayama S."/>
            <person name="Kitamura K."/>
            <person name="Lehmann A."/>
            <person name="Nikaido O."/>
            <person name="Toda T."/>
        </authorList>
    </citation>
    <scope>NUCLEOTIDE SEQUENCE [GENOMIC DNA]</scope>
    <scope>FUNCTION</scope>
    <scope>SUBUNIT</scope>
    <scope>SUBCELLULAR LOCATION</scope>
    <source>
        <strain>972 / ATCC 24843</strain>
    </source>
</reference>
<reference key="2">
    <citation type="journal article" date="2002" name="Nature">
        <title>The genome sequence of Schizosaccharomyces pombe.</title>
        <authorList>
            <person name="Wood V."/>
            <person name="Gwilliam R."/>
            <person name="Rajandream M.A."/>
            <person name="Lyne M.H."/>
            <person name="Lyne R."/>
            <person name="Stewart A."/>
            <person name="Sgouros J.G."/>
            <person name="Peat N."/>
            <person name="Hayles J."/>
            <person name="Baker S.G."/>
            <person name="Basham D."/>
            <person name="Bowman S."/>
            <person name="Brooks K."/>
            <person name="Brown D."/>
            <person name="Brown S."/>
            <person name="Chillingworth T."/>
            <person name="Churcher C.M."/>
            <person name="Collins M."/>
            <person name="Connor R."/>
            <person name="Cronin A."/>
            <person name="Davis P."/>
            <person name="Feltwell T."/>
            <person name="Fraser A."/>
            <person name="Gentles S."/>
            <person name="Goble A."/>
            <person name="Hamlin N."/>
            <person name="Harris D.E."/>
            <person name="Hidalgo J."/>
            <person name="Hodgson G."/>
            <person name="Holroyd S."/>
            <person name="Hornsby T."/>
            <person name="Howarth S."/>
            <person name="Huckle E.J."/>
            <person name="Hunt S."/>
            <person name="Jagels K."/>
            <person name="James K.D."/>
            <person name="Jones L."/>
            <person name="Jones M."/>
            <person name="Leather S."/>
            <person name="McDonald S."/>
            <person name="McLean J."/>
            <person name="Mooney P."/>
            <person name="Moule S."/>
            <person name="Mungall K.L."/>
            <person name="Murphy L.D."/>
            <person name="Niblett D."/>
            <person name="Odell C."/>
            <person name="Oliver K."/>
            <person name="O'Neil S."/>
            <person name="Pearson D."/>
            <person name="Quail M.A."/>
            <person name="Rabbinowitsch E."/>
            <person name="Rutherford K.M."/>
            <person name="Rutter S."/>
            <person name="Saunders D."/>
            <person name="Seeger K."/>
            <person name="Sharp S."/>
            <person name="Skelton J."/>
            <person name="Simmonds M.N."/>
            <person name="Squares R."/>
            <person name="Squares S."/>
            <person name="Stevens K."/>
            <person name="Taylor K."/>
            <person name="Taylor R.G."/>
            <person name="Tivey A."/>
            <person name="Walsh S.V."/>
            <person name="Warren T."/>
            <person name="Whitehead S."/>
            <person name="Woodward J.R."/>
            <person name="Volckaert G."/>
            <person name="Aert R."/>
            <person name="Robben J."/>
            <person name="Grymonprez B."/>
            <person name="Weltjens I."/>
            <person name="Vanstreels E."/>
            <person name="Rieger M."/>
            <person name="Schaefer M."/>
            <person name="Mueller-Auer S."/>
            <person name="Gabel C."/>
            <person name="Fuchs M."/>
            <person name="Duesterhoeft A."/>
            <person name="Fritzc C."/>
            <person name="Holzer E."/>
            <person name="Moestl D."/>
            <person name="Hilbert H."/>
            <person name="Borzym K."/>
            <person name="Langer I."/>
            <person name="Beck A."/>
            <person name="Lehrach H."/>
            <person name="Reinhardt R."/>
            <person name="Pohl T.M."/>
            <person name="Eger P."/>
            <person name="Zimmermann W."/>
            <person name="Wedler H."/>
            <person name="Wambutt R."/>
            <person name="Purnelle B."/>
            <person name="Goffeau A."/>
            <person name="Cadieu E."/>
            <person name="Dreano S."/>
            <person name="Gloux S."/>
            <person name="Lelaure V."/>
            <person name="Mottier S."/>
            <person name="Galibert F."/>
            <person name="Aves S.J."/>
            <person name="Xiang Z."/>
            <person name="Hunt C."/>
            <person name="Moore K."/>
            <person name="Hurst S.M."/>
            <person name="Lucas M."/>
            <person name="Rochet M."/>
            <person name="Gaillardin C."/>
            <person name="Tallada V.A."/>
            <person name="Garzon A."/>
            <person name="Thode G."/>
            <person name="Daga R.R."/>
            <person name="Cruzado L."/>
            <person name="Jimenez J."/>
            <person name="Sanchez M."/>
            <person name="del Rey F."/>
            <person name="Benito J."/>
            <person name="Dominguez A."/>
            <person name="Revuelta J.L."/>
            <person name="Moreno S."/>
            <person name="Armstrong J."/>
            <person name="Forsburg S.L."/>
            <person name="Cerutti L."/>
            <person name="Lowe T."/>
            <person name="McCombie W.R."/>
            <person name="Paulsen I."/>
            <person name="Potashkin J."/>
            <person name="Shpakovski G.V."/>
            <person name="Ussery D."/>
            <person name="Barrell B.G."/>
            <person name="Nurse P."/>
        </authorList>
    </citation>
    <scope>NUCLEOTIDE SEQUENCE [LARGE SCALE GENOMIC DNA]</scope>
    <source>
        <strain>972 / ATCC 24843</strain>
    </source>
</reference>
<reference key="3">
    <citation type="journal article" date="2004" name="Genes Cells">
        <title>Molecular interactions of fission yeast Skp1 and its role in the DNA damage checkpoint.</title>
        <authorList>
            <person name="Lehmann A."/>
            <person name="Katayama S."/>
            <person name="Harrison C."/>
            <person name="Dhut S."/>
            <person name="Kitamura K."/>
            <person name="McDonald N."/>
            <person name="Toda T."/>
        </authorList>
    </citation>
    <scope>INTERACTION WITH SKP1</scope>
</reference>
<reference key="4">
    <citation type="journal article" date="2006" name="Biochem. Biophys. Res. Commun.">
        <title>Fission yeast Mcl1 interacts with SCF(Pof3) and is required for centromere formation.</title>
        <authorList>
            <person name="Mamnun Y.M."/>
            <person name="Katayama S."/>
            <person name="Toda T."/>
        </authorList>
    </citation>
    <scope>INTERACTION WITH MCL1</scope>
</reference>
<reference key="5">
    <citation type="journal article" date="2006" name="Nat. Biotechnol.">
        <title>ORFeome cloning and global analysis of protein localization in the fission yeast Schizosaccharomyces pombe.</title>
        <authorList>
            <person name="Matsuyama A."/>
            <person name="Arai R."/>
            <person name="Yashiroda Y."/>
            <person name="Shirai A."/>
            <person name="Kamata A."/>
            <person name="Sekido S."/>
            <person name="Kobayashi Y."/>
            <person name="Hashimoto A."/>
            <person name="Hamamoto M."/>
            <person name="Hiraoka Y."/>
            <person name="Horinouchi S."/>
            <person name="Yoshida M."/>
        </authorList>
    </citation>
    <scope>SUBCELLULAR LOCATION [LARGE SCALE ANALYSIS]</scope>
</reference>
<comment type="function">
    <text evidence="2">Has a role in substrate recognition in the Skp1-Cullin-1/Cdc53-F-box (SCF) ubiquitin ligase complex. Required for the maintenance of telomere length and transcriptional silencing at the telomere. Also required for chromosome segregation.</text>
</comment>
<comment type="subunit">
    <text evidence="2 3 4">A part of the E3 ubiquitin ligase Skp1-Cullin-1-F-box (SCF) complex. Interacts with cul1, mcl1 and skp1.</text>
</comment>
<comment type="interaction">
    <interactant intactId="EBI-1153554">
        <id>O74991</id>
    </interactant>
    <interactant intactId="EBI-1154807">
        <id>O13790</id>
        <label>cul1</label>
    </interactant>
    <organismsDiffer>false</organismsDiffer>
    <experiments>2</experiments>
</comment>
<comment type="interaction">
    <interactant intactId="EBI-1153554">
        <id>O74991</id>
    </interactant>
    <interactant intactId="EBI-1203666">
        <id>Q9C107</id>
        <label>mcl1</label>
    </interactant>
    <organismsDiffer>false</organismsDiffer>
    <experiments>2</experiments>
</comment>
<comment type="interaction">
    <interactant intactId="EBI-1153554">
        <id>O74991</id>
    </interactant>
    <interactant intactId="EBI-1172248">
        <id>Q9Y709</id>
        <label>skp1</label>
    </interactant>
    <organismsDiffer>false</organismsDiffer>
    <experiments>3</experiments>
</comment>
<comment type="subcellular location">
    <subcellularLocation>
        <location>Mitochondrion</location>
    </subcellularLocation>
    <subcellularLocation>
        <location>Nucleus</location>
    </subcellularLocation>
</comment>
<protein>
    <recommendedName>
        <fullName>F-box/TPR repeat protein pof3</fullName>
    </recommendedName>
</protein>
<feature type="chain" id="PRO_0000106362" description="F-box/TPR repeat protein pof3">
    <location>
        <begin position="1"/>
        <end position="577"/>
    </location>
</feature>
<feature type="repeat" description="TPR 1">
    <location>
        <begin position="6"/>
        <end position="39"/>
    </location>
</feature>
<feature type="repeat" description="TPR 2">
    <location>
        <begin position="41"/>
        <end position="74"/>
    </location>
</feature>
<feature type="repeat" description="TPR 3">
    <location>
        <begin position="76"/>
        <end position="108"/>
    </location>
</feature>
<feature type="domain" description="F-box" evidence="1">
    <location>
        <begin position="138"/>
        <end position="180"/>
    </location>
</feature>
<gene>
    <name type="primary">pof3</name>
    <name type="ORF">SPCC338.16</name>
</gene>
<organism>
    <name type="scientific">Schizosaccharomyces pombe (strain 972 / ATCC 24843)</name>
    <name type="common">Fission yeast</name>
    <dbReference type="NCBI Taxonomy" id="284812"/>
    <lineage>
        <taxon>Eukaryota</taxon>
        <taxon>Fungi</taxon>
        <taxon>Dikarya</taxon>
        <taxon>Ascomycota</taxon>
        <taxon>Taphrinomycotina</taxon>
        <taxon>Schizosaccharomycetes</taxon>
        <taxon>Schizosaccharomycetales</taxon>
        <taxon>Schizosaccharomycetaceae</taxon>
        <taxon>Schizosaccharomyces</taxon>
    </lineage>
</organism>